<keyword id="KW-0025">Alternative splicing</keyword>
<keyword id="KW-0156">Chromatin regulator</keyword>
<keyword id="KW-0158">Chromosome</keyword>
<keyword id="KW-0489">Methyltransferase</keyword>
<keyword id="KW-0539">Nucleus</keyword>
<keyword id="KW-0597">Phosphoprotein</keyword>
<keyword id="KW-1185">Reference proteome</keyword>
<keyword id="KW-0678">Repressor</keyword>
<keyword id="KW-0949">S-adenosyl-L-methionine</keyword>
<keyword id="KW-0804">Transcription</keyword>
<keyword id="KW-0805">Transcription regulation</keyword>
<keyword id="KW-0808">Transferase</keyword>
<name>SUV42_DROME</name>
<dbReference type="EC" id="2.1.1.361" evidence="8"/>
<dbReference type="EC" id="2.1.1.362" evidence="8"/>
<dbReference type="EMBL" id="AE014298">
    <property type="protein sequence ID" value="AAF45537.1"/>
    <property type="molecule type" value="Genomic_DNA"/>
</dbReference>
<dbReference type="EMBL" id="AL031581">
    <property type="protein sequence ID" value="CAA20894.2"/>
    <property type="status" value="ALT_SEQ"/>
    <property type="molecule type" value="Genomic_DNA"/>
</dbReference>
<dbReference type="EMBL" id="AY069604">
    <property type="protein sequence ID" value="AAL39749.1"/>
    <property type="molecule type" value="mRNA"/>
</dbReference>
<dbReference type="EMBL" id="AY089517">
    <property type="protein sequence ID" value="AAL90255.1"/>
    <property type="status" value="ALT_INIT"/>
    <property type="molecule type" value="mRNA"/>
</dbReference>
<dbReference type="PIR" id="T13389">
    <property type="entry name" value="T13389"/>
</dbReference>
<dbReference type="RefSeq" id="NP_001245453.1">
    <molecule id="Q9W5E0-1"/>
    <property type="nucleotide sequence ID" value="NM_001258524.1"/>
</dbReference>
<dbReference type="RefSeq" id="NP_569853.1">
    <molecule id="Q9W5E0-1"/>
    <property type="nucleotide sequence ID" value="NM_130497.4"/>
</dbReference>
<dbReference type="SMR" id="Q9W5E0"/>
<dbReference type="BioGRID" id="57583">
    <property type="interactions" value="10"/>
</dbReference>
<dbReference type="FunCoup" id="Q9W5E0">
    <property type="interactions" value="415"/>
</dbReference>
<dbReference type="IntAct" id="Q9W5E0">
    <property type="interactions" value="3"/>
</dbReference>
<dbReference type="STRING" id="7227.FBpp0070146"/>
<dbReference type="GlyGen" id="Q9W5E0">
    <property type="glycosylation" value="4 sites"/>
</dbReference>
<dbReference type="iPTMnet" id="Q9W5E0"/>
<dbReference type="PaxDb" id="7227-FBpp0070146"/>
<dbReference type="EnsemblMetazoa" id="FBtr0070151">
    <molecule id="Q9W5E0-1"/>
    <property type="protein sequence ID" value="FBpp0070146"/>
    <property type="gene ID" value="FBgn0025639"/>
</dbReference>
<dbReference type="EnsemblMetazoa" id="FBtr0308652">
    <molecule id="Q9W5E0-1"/>
    <property type="protein sequence ID" value="FBpp0300875"/>
    <property type="gene ID" value="FBgn0025639"/>
</dbReference>
<dbReference type="GeneID" id="31015"/>
<dbReference type="KEGG" id="dme:Dmel_CG13363"/>
<dbReference type="UCSC" id="CG13363-RA">
    <molecule id="Q9W5E0-1"/>
    <property type="organism name" value="d. melanogaster"/>
</dbReference>
<dbReference type="AGR" id="FB:FBgn0025639"/>
<dbReference type="CTD" id="31015"/>
<dbReference type="FlyBase" id="FBgn0025639">
    <property type="gene designation" value="Hmt4-20"/>
</dbReference>
<dbReference type="VEuPathDB" id="VectorBase:FBgn0025639"/>
<dbReference type="eggNOG" id="KOG2589">
    <property type="taxonomic scope" value="Eukaryota"/>
</dbReference>
<dbReference type="GeneTree" id="ENSGT00940000173121"/>
<dbReference type="HOGENOM" id="CLU_004814_0_0_1"/>
<dbReference type="InParanoid" id="Q9W5E0"/>
<dbReference type="OMA" id="AAQHIHC"/>
<dbReference type="OrthoDB" id="6627536at2759"/>
<dbReference type="PhylomeDB" id="Q9W5E0"/>
<dbReference type="BRENDA" id="2.1.1.361">
    <property type="organism ID" value="1994"/>
</dbReference>
<dbReference type="Reactome" id="R-DME-3214841">
    <property type="pathway name" value="PKMTs methylate histone lysines"/>
</dbReference>
<dbReference type="BioGRID-ORCS" id="31015">
    <property type="hits" value="0 hits in 3 CRISPR screens"/>
</dbReference>
<dbReference type="ChiTaRS" id="Hmt4-20">
    <property type="organism name" value="fly"/>
</dbReference>
<dbReference type="GenomeRNAi" id="31015"/>
<dbReference type="PRO" id="PR:Q9W5E0"/>
<dbReference type="Proteomes" id="UP000000803">
    <property type="component" value="Chromosome X"/>
</dbReference>
<dbReference type="Bgee" id="FBgn0025639">
    <property type="expression patterns" value="Expressed in cleaving embryo and 259 other cell types or tissues"/>
</dbReference>
<dbReference type="ExpressionAtlas" id="Q9W5E0">
    <property type="expression patterns" value="baseline and differential"/>
</dbReference>
<dbReference type="GO" id="GO:0000792">
    <property type="term" value="C:heterochromatin"/>
    <property type="evidence" value="ECO:0000314"/>
    <property type="project" value="FlyBase"/>
</dbReference>
<dbReference type="GO" id="GO:0005634">
    <property type="term" value="C:nucleus"/>
    <property type="evidence" value="ECO:0000314"/>
    <property type="project" value="FlyBase"/>
</dbReference>
<dbReference type="GO" id="GO:0042799">
    <property type="term" value="F:histone H4K20 methyltransferase activity"/>
    <property type="evidence" value="ECO:0000318"/>
    <property type="project" value="GO_Central"/>
</dbReference>
<dbReference type="GO" id="GO:0140944">
    <property type="term" value="F:histone H4K20 monomethyltransferase activity"/>
    <property type="evidence" value="ECO:0007669"/>
    <property type="project" value="UniProtKB-EC"/>
</dbReference>
<dbReference type="GO" id="GO:0140943">
    <property type="term" value="F:histone H4K20 trimethyltransferase activity"/>
    <property type="evidence" value="ECO:0000314"/>
    <property type="project" value="FlyBase"/>
</dbReference>
<dbReference type="GO" id="GO:0140941">
    <property type="term" value="F:histone H4K20me methyltransferase activity"/>
    <property type="evidence" value="ECO:0000315"/>
    <property type="project" value="FlyBase"/>
</dbReference>
<dbReference type="GO" id="GO:0140719">
    <property type="term" value="P:constitutive heterochromatin formation"/>
    <property type="evidence" value="ECO:0000315"/>
    <property type="project" value="FlyBase"/>
</dbReference>
<dbReference type="GO" id="GO:0040029">
    <property type="term" value="P:epigenetic regulation of gene expression"/>
    <property type="evidence" value="ECO:0000315"/>
    <property type="project" value="UniProtKB"/>
</dbReference>
<dbReference type="GO" id="GO:0031507">
    <property type="term" value="P:heterochromatin formation"/>
    <property type="evidence" value="ECO:0000315"/>
    <property type="project" value="FlyBase"/>
</dbReference>
<dbReference type="GO" id="GO:0032259">
    <property type="term" value="P:methylation"/>
    <property type="evidence" value="ECO:0007669"/>
    <property type="project" value="UniProtKB-KW"/>
</dbReference>
<dbReference type="GO" id="GO:0141005">
    <property type="term" value="P:transposable element silencing by heterochromatin formation"/>
    <property type="evidence" value="ECO:0000315"/>
    <property type="project" value="FlyBase"/>
</dbReference>
<dbReference type="FunFam" id="1.10.10.1700:FF:000001">
    <property type="entry name" value="Histone-lysine N-methyltransferase"/>
    <property type="match status" value="1"/>
</dbReference>
<dbReference type="FunFam" id="2.170.270.10:FF:000006">
    <property type="entry name" value="Histone-lysine N-methyltransferase"/>
    <property type="match status" value="1"/>
</dbReference>
<dbReference type="Gene3D" id="1.10.10.1700">
    <property type="entry name" value="Histone-lysine N-methyltransferase"/>
    <property type="match status" value="1"/>
</dbReference>
<dbReference type="Gene3D" id="2.170.270.10">
    <property type="entry name" value="SET domain"/>
    <property type="match status" value="1"/>
</dbReference>
<dbReference type="InterPro" id="IPR041938">
    <property type="entry name" value="Hist-Lys_N-MTase_N"/>
</dbReference>
<dbReference type="InterPro" id="IPR001214">
    <property type="entry name" value="SET_dom"/>
</dbReference>
<dbReference type="InterPro" id="IPR046341">
    <property type="entry name" value="SET_dom_sf"/>
</dbReference>
<dbReference type="InterPro" id="IPR039977">
    <property type="entry name" value="Suv4-20/Set9"/>
</dbReference>
<dbReference type="InterPro" id="IPR025790">
    <property type="entry name" value="Suv4-20_animal"/>
</dbReference>
<dbReference type="PANTHER" id="PTHR12977:SF4">
    <property type="entry name" value="HISTONE-LYSINE N-METHYLTRANSFERASE KMT5B"/>
    <property type="match status" value="1"/>
</dbReference>
<dbReference type="PANTHER" id="PTHR12977">
    <property type="entry name" value="SUPPRESSOR OF VARIEGATION 4-20-RELATED"/>
    <property type="match status" value="1"/>
</dbReference>
<dbReference type="Pfam" id="PF00856">
    <property type="entry name" value="SET"/>
    <property type="match status" value="1"/>
</dbReference>
<dbReference type="SMART" id="SM00317">
    <property type="entry name" value="SET"/>
    <property type="match status" value="1"/>
</dbReference>
<dbReference type="SUPFAM" id="SSF82199">
    <property type="entry name" value="SET domain"/>
    <property type="match status" value="1"/>
</dbReference>
<dbReference type="PROSITE" id="PS51570">
    <property type="entry name" value="SAM_MT43_SUVAR420_2"/>
    <property type="match status" value="1"/>
</dbReference>
<dbReference type="PROSITE" id="PS50280">
    <property type="entry name" value="SET"/>
    <property type="match status" value="1"/>
</dbReference>
<reference key="1">
    <citation type="journal article" date="2000" name="Science">
        <title>The genome sequence of Drosophila melanogaster.</title>
        <authorList>
            <person name="Adams M.D."/>
            <person name="Celniker S.E."/>
            <person name="Holt R.A."/>
            <person name="Evans C.A."/>
            <person name="Gocayne J.D."/>
            <person name="Amanatides P.G."/>
            <person name="Scherer S.E."/>
            <person name="Li P.W."/>
            <person name="Hoskins R.A."/>
            <person name="Galle R.F."/>
            <person name="George R.A."/>
            <person name="Lewis S.E."/>
            <person name="Richards S."/>
            <person name="Ashburner M."/>
            <person name="Henderson S.N."/>
            <person name="Sutton G.G."/>
            <person name="Wortman J.R."/>
            <person name="Yandell M.D."/>
            <person name="Zhang Q."/>
            <person name="Chen L.X."/>
            <person name="Brandon R.C."/>
            <person name="Rogers Y.-H.C."/>
            <person name="Blazej R.G."/>
            <person name="Champe M."/>
            <person name="Pfeiffer B.D."/>
            <person name="Wan K.H."/>
            <person name="Doyle C."/>
            <person name="Baxter E.G."/>
            <person name="Helt G."/>
            <person name="Nelson C.R."/>
            <person name="Miklos G.L.G."/>
            <person name="Abril J.F."/>
            <person name="Agbayani A."/>
            <person name="An H.-J."/>
            <person name="Andrews-Pfannkoch C."/>
            <person name="Baldwin D."/>
            <person name="Ballew R.M."/>
            <person name="Basu A."/>
            <person name="Baxendale J."/>
            <person name="Bayraktaroglu L."/>
            <person name="Beasley E.M."/>
            <person name="Beeson K.Y."/>
            <person name="Benos P.V."/>
            <person name="Berman B.P."/>
            <person name="Bhandari D."/>
            <person name="Bolshakov S."/>
            <person name="Borkova D."/>
            <person name="Botchan M.R."/>
            <person name="Bouck J."/>
            <person name="Brokstein P."/>
            <person name="Brottier P."/>
            <person name="Burtis K.C."/>
            <person name="Busam D.A."/>
            <person name="Butler H."/>
            <person name="Cadieu E."/>
            <person name="Center A."/>
            <person name="Chandra I."/>
            <person name="Cherry J.M."/>
            <person name="Cawley S."/>
            <person name="Dahlke C."/>
            <person name="Davenport L.B."/>
            <person name="Davies P."/>
            <person name="de Pablos B."/>
            <person name="Delcher A."/>
            <person name="Deng Z."/>
            <person name="Mays A.D."/>
            <person name="Dew I."/>
            <person name="Dietz S.M."/>
            <person name="Dodson K."/>
            <person name="Doup L.E."/>
            <person name="Downes M."/>
            <person name="Dugan-Rocha S."/>
            <person name="Dunkov B.C."/>
            <person name="Dunn P."/>
            <person name="Durbin K.J."/>
            <person name="Evangelista C.C."/>
            <person name="Ferraz C."/>
            <person name="Ferriera S."/>
            <person name="Fleischmann W."/>
            <person name="Fosler C."/>
            <person name="Gabrielian A.E."/>
            <person name="Garg N.S."/>
            <person name="Gelbart W.M."/>
            <person name="Glasser K."/>
            <person name="Glodek A."/>
            <person name="Gong F."/>
            <person name="Gorrell J.H."/>
            <person name="Gu Z."/>
            <person name="Guan P."/>
            <person name="Harris M."/>
            <person name="Harris N.L."/>
            <person name="Harvey D.A."/>
            <person name="Heiman T.J."/>
            <person name="Hernandez J.R."/>
            <person name="Houck J."/>
            <person name="Hostin D."/>
            <person name="Houston K.A."/>
            <person name="Howland T.J."/>
            <person name="Wei M.-H."/>
            <person name="Ibegwam C."/>
            <person name="Jalali M."/>
            <person name="Kalush F."/>
            <person name="Karpen G.H."/>
            <person name="Ke Z."/>
            <person name="Kennison J.A."/>
            <person name="Ketchum K.A."/>
            <person name="Kimmel B.E."/>
            <person name="Kodira C.D."/>
            <person name="Kraft C.L."/>
            <person name="Kravitz S."/>
            <person name="Kulp D."/>
            <person name="Lai Z."/>
            <person name="Lasko P."/>
            <person name="Lei Y."/>
            <person name="Levitsky A.A."/>
            <person name="Li J.H."/>
            <person name="Li Z."/>
            <person name="Liang Y."/>
            <person name="Lin X."/>
            <person name="Liu X."/>
            <person name="Mattei B."/>
            <person name="McIntosh T.C."/>
            <person name="McLeod M.P."/>
            <person name="McPherson D."/>
            <person name="Merkulov G."/>
            <person name="Milshina N.V."/>
            <person name="Mobarry C."/>
            <person name="Morris J."/>
            <person name="Moshrefi A."/>
            <person name="Mount S.M."/>
            <person name="Moy M."/>
            <person name="Murphy B."/>
            <person name="Murphy L."/>
            <person name="Muzny D.M."/>
            <person name="Nelson D.L."/>
            <person name="Nelson D.R."/>
            <person name="Nelson K.A."/>
            <person name="Nixon K."/>
            <person name="Nusskern D.R."/>
            <person name="Pacleb J.M."/>
            <person name="Palazzolo M."/>
            <person name="Pittman G.S."/>
            <person name="Pan S."/>
            <person name="Pollard J."/>
            <person name="Puri V."/>
            <person name="Reese M.G."/>
            <person name="Reinert K."/>
            <person name="Remington K."/>
            <person name="Saunders R.D.C."/>
            <person name="Scheeler F."/>
            <person name="Shen H."/>
            <person name="Shue B.C."/>
            <person name="Siden-Kiamos I."/>
            <person name="Simpson M."/>
            <person name="Skupski M.P."/>
            <person name="Smith T.J."/>
            <person name="Spier E."/>
            <person name="Spradling A.C."/>
            <person name="Stapleton M."/>
            <person name="Strong R."/>
            <person name="Sun E."/>
            <person name="Svirskas R."/>
            <person name="Tector C."/>
            <person name="Turner R."/>
            <person name="Venter E."/>
            <person name="Wang A.H."/>
            <person name="Wang X."/>
            <person name="Wang Z.-Y."/>
            <person name="Wassarman D.A."/>
            <person name="Weinstock G.M."/>
            <person name="Weissenbach J."/>
            <person name="Williams S.M."/>
            <person name="Woodage T."/>
            <person name="Worley K.C."/>
            <person name="Wu D."/>
            <person name="Yang S."/>
            <person name="Yao Q.A."/>
            <person name="Ye J."/>
            <person name="Yeh R.-F."/>
            <person name="Zaveri J.S."/>
            <person name="Zhan M."/>
            <person name="Zhang G."/>
            <person name="Zhao Q."/>
            <person name="Zheng L."/>
            <person name="Zheng X.H."/>
            <person name="Zhong F.N."/>
            <person name="Zhong W."/>
            <person name="Zhou X."/>
            <person name="Zhu S.C."/>
            <person name="Zhu X."/>
            <person name="Smith H.O."/>
            <person name="Gibbs R.A."/>
            <person name="Myers E.W."/>
            <person name="Rubin G.M."/>
            <person name="Venter J.C."/>
        </authorList>
    </citation>
    <scope>NUCLEOTIDE SEQUENCE [LARGE SCALE GENOMIC DNA]</scope>
    <source>
        <strain>Berkeley</strain>
    </source>
</reference>
<reference key="2">
    <citation type="journal article" date="2002" name="Genome Biol.">
        <title>Annotation of the Drosophila melanogaster euchromatic genome: a systematic review.</title>
        <authorList>
            <person name="Misra S."/>
            <person name="Crosby M.A."/>
            <person name="Mungall C.J."/>
            <person name="Matthews B.B."/>
            <person name="Campbell K.S."/>
            <person name="Hradecky P."/>
            <person name="Huang Y."/>
            <person name="Kaminker J.S."/>
            <person name="Millburn G.H."/>
            <person name="Prochnik S.E."/>
            <person name="Smith C.D."/>
            <person name="Tupy J.L."/>
            <person name="Whitfield E.J."/>
            <person name="Bayraktaroglu L."/>
            <person name="Berman B.P."/>
            <person name="Bettencourt B.R."/>
            <person name="Celniker S.E."/>
            <person name="de Grey A.D.N.J."/>
            <person name="Drysdale R.A."/>
            <person name="Harris N.L."/>
            <person name="Richter J."/>
            <person name="Russo S."/>
            <person name="Schroeder A.J."/>
            <person name="Shu S.Q."/>
            <person name="Stapleton M."/>
            <person name="Yamada C."/>
            <person name="Ashburner M."/>
            <person name="Gelbart W.M."/>
            <person name="Rubin G.M."/>
            <person name="Lewis S.E."/>
        </authorList>
    </citation>
    <scope>GENOME REANNOTATION</scope>
    <source>
        <strain>Berkeley</strain>
    </source>
</reference>
<reference key="3">
    <citation type="journal article" date="2000" name="Science">
        <title>From sequence to chromosome: the tip of the X chromosome of D. melanogaster.</title>
        <authorList>
            <person name="Benos P.V."/>
            <person name="Gatt M.K."/>
            <person name="Ashburner M."/>
            <person name="Murphy L."/>
            <person name="Harris D."/>
            <person name="Barrell B.G."/>
            <person name="Ferraz C."/>
            <person name="Vidal S."/>
            <person name="Brun C."/>
            <person name="Demailles J."/>
            <person name="Cadieu E."/>
            <person name="Dreano S."/>
            <person name="Gloux S."/>
            <person name="Lelaure V."/>
            <person name="Mottier S."/>
            <person name="Galibert F."/>
            <person name="Borkova D."/>
            <person name="Minana B."/>
            <person name="Kafatos F.C."/>
            <person name="Louis C."/>
            <person name="Siden-Kiamos I."/>
            <person name="Bolshakov S."/>
            <person name="Papagiannakis G."/>
            <person name="Spanos L."/>
            <person name="Cox S."/>
            <person name="Madueno E."/>
            <person name="de Pablos B."/>
            <person name="Modolell J."/>
            <person name="Peter A."/>
            <person name="Schoettler P."/>
            <person name="Werner M."/>
            <person name="Mourkioti F."/>
            <person name="Beinert N."/>
            <person name="Dowe G."/>
            <person name="Schaefer U."/>
            <person name="Jaeckle H."/>
            <person name="Bucheton A."/>
            <person name="Callister D.M."/>
            <person name="Campbell L.A."/>
            <person name="Darlamitsou A."/>
            <person name="Henderson N.S."/>
            <person name="McMillan P.J."/>
            <person name="Salles C."/>
            <person name="Tait E.A."/>
            <person name="Valenti P."/>
            <person name="Saunders R.D.C."/>
            <person name="Glover D.M."/>
        </authorList>
    </citation>
    <scope>NUCLEOTIDE SEQUENCE [LARGE SCALE GENOMIC DNA]</scope>
    <source>
        <strain>Oregon-R</strain>
    </source>
</reference>
<reference key="4">
    <citation type="journal article" date="2002" name="Genome Biol.">
        <title>A Drosophila full-length cDNA resource.</title>
        <authorList>
            <person name="Stapleton M."/>
            <person name="Carlson J.W."/>
            <person name="Brokstein P."/>
            <person name="Yu C."/>
            <person name="Champe M."/>
            <person name="George R.A."/>
            <person name="Guarin H."/>
            <person name="Kronmiller B."/>
            <person name="Pacleb J.M."/>
            <person name="Park S."/>
            <person name="Wan K.H."/>
            <person name="Rubin G.M."/>
            <person name="Celniker S.E."/>
        </authorList>
    </citation>
    <scope>NUCLEOTIDE SEQUENCE [LARGE SCALE MRNA] (ISOFORM 2)</scope>
    <scope>NUCLEOTIDE SEQUENCE [LARGE SCALE MRNA] OF 453-1300 (ISOFORM 1)</scope>
    <source>
        <strain>Berkeley</strain>
        <tissue>Embryo</tissue>
        <tissue>Ovary</tissue>
    </source>
</reference>
<reference key="5">
    <citation type="journal article" date="2004" name="Genes Dev.">
        <title>A silencing pathway to induce H3-K9 and H4-K20 trimethylation at constitutive heterochromatin.</title>
        <authorList>
            <person name="Schotta G."/>
            <person name="Lachner M."/>
            <person name="Sarma K."/>
            <person name="Ebert A."/>
            <person name="Sengupta R."/>
            <person name="Reuter G."/>
            <person name="Reinberg D."/>
            <person name="Jenuwein T."/>
        </authorList>
    </citation>
    <scope>FUNCTION</scope>
    <scope>SUBCELLULAR LOCATION</scope>
</reference>
<reference key="6">
    <citation type="journal article" date="2008" name="J. Proteome Res.">
        <title>Phosphoproteome analysis of Drosophila melanogaster embryos.</title>
        <authorList>
            <person name="Zhai B."/>
            <person name="Villen J."/>
            <person name="Beausoleil S.A."/>
            <person name="Mintseris J."/>
            <person name="Gygi S.P."/>
        </authorList>
    </citation>
    <scope>PHOSPHORYLATION [LARGE SCALE ANALYSIS] AT SER-831; SER-833 AND THR-930</scope>
    <scope>IDENTIFICATION BY MASS SPECTROMETRY</scope>
    <source>
        <tissue>Embryo</tissue>
    </source>
</reference>
<proteinExistence type="evidence at protein level"/>
<feature type="chain" id="PRO_0000281797" description="Histone-lysine N-methyltransferase Suv4-20">
    <location>
        <begin position="1"/>
        <end position="1300"/>
    </location>
</feature>
<feature type="domain" description="SET" evidence="1">
    <location>
        <begin position="255"/>
        <end position="366"/>
    </location>
</feature>
<feature type="region of interest" description="Disordered" evidence="3">
    <location>
        <begin position="1"/>
        <end position="136"/>
    </location>
</feature>
<feature type="region of interest" description="Disordered" evidence="3">
    <location>
        <begin position="432"/>
        <end position="490"/>
    </location>
</feature>
<feature type="region of interest" description="Disordered" evidence="3">
    <location>
        <begin position="535"/>
        <end position="574"/>
    </location>
</feature>
<feature type="region of interest" description="Disordered" evidence="3">
    <location>
        <begin position="669"/>
        <end position="744"/>
    </location>
</feature>
<feature type="region of interest" description="Disordered" evidence="3">
    <location>
        <begin position="756"/>
        <end position="856"/>
    </location>
</feature>
<feature type="region of interest" description="Disordered" evidence="3">
    <location>
        <begin position="891"/>
        <end position="927"/>
    </location>
</feature>
<feature type="region of interest" description="Disordered" evidence="3">
    <location>
        <begin position="956"/>
        <end position="988"/>
    </location>
</feature>
<feature type="region of interest" description="Disordered" evidence="3">
    <location>
        <begin position="1006"/>
        <end position="1188"/>
    </location>
</feature>
<feature type="region of interest" description="Disordered" evidence="3">
    <location>
        <begin position="1212"/>
        <end position="1233"/>
    </location>
</feature>
<feature type="region of interest" description="Disordered" evidence="3">
    <location>
        <begin position="1263"/>
        <end position="1300"/>
    </location>
</feature>
<feature type="compositionally biased region" description="Low complexity" evidence="3">
    <location>
        <begin position="14"/>
        <end position="62"/>
    </location>
</feature>
<feature type="compositionally biased region" description="Polar residues" evidence="3">
    <location>
        <begin position="79"/>
        <end position="97"/>
    </location>
</feature>
<feature type="compositionally biased region" description="Gly residues" evidence="3">
    <location>
        <begin position="116"/>
        <end position="128"/>
    </location>
</feature>
<feature type="compositionally biased region" description="Low complexity" evidence="3">
    <location>
        <begin position="435"/>
        <end position="451"/>
    </location>
</feature>
<feature type="compositionally biased region" description="Polar residues" evidence="3">
    <location>
        <begin position="452"/>
        <end position="462"/>
    </location>
</feature>
<feature type="compositionally biased region" description="Basic residues" evidence="3">
    <location>
        <begin position="536"/>
        <end position="557"/>
    </location>
</feature>
<feature type="compositionally biased region" description="Low complexity" evidence="3">
    <location>
        <begin position="564"/>
        <end position="574"/>
    </location>
</feature>
<feature type="compositionally biased region" description="Basic and acidic residues" evidence="3">
    <location>
        <begin position="677"/>
        <end position="688"/>
    </location>
</feature>
<feature type="compositionally biased region" description="Basic and acidic residues" evidence="3">
    <location>
        <begin position="698"/>
        <end position="707"/>
    </location>
</feature>
<feature type="compositionally biased region" description="Basic and acidic residues" evidence="3">
    <location>
        <begin position="722"/>
        <end position="735"/>
    </location>
</feature>
<feature type="compositionally biased region" description="Low complexity" evidence="3">
    <location>
        <begin position="756"/>
        <end position="821"/>
    </location>
</feature>
<feature type="compositionally biased region" description="Polar residues" evidence="3">
    <location>
        <begin position="822"/>
        <end position="834"/>
    </location>
</feature>
<feature type="compositionally biased region" description="Polar residues" evidence="3">
    <location>
        <begin position="911"/>
        <end position="923"/>
    </location>
</feature>
<feature type="compositionally biased region" description="Acidic residues" evidence="3">
    <location>
        <begin position="1009"/>
        <end position="1029"/>
    </location>
</feature>
<feature type="compositionally biased region" description="Basic residues" evidence="3">
    <location>
        <begin position="1041"/>
        <end position="1055"/>
    </location>
</feature>
<feature type="compositionally biased region" description="Low complexity" evidence="3">
    <location>
        <begin position="1117"/>
        <end position="1145"/>
    </location>
</feature>
<feature type="compositionally biased region" description="Low complexity" evidence="3">
    <location>
        <begin position="1161"/>
        <end position="1178"/>
    </location>
</feature>
<feature type="compositionally biased region" description="Basic residues" evidence="3">
    <location>
        <begin position="1289"/>
        <end position="1300"/>
    </location>
</feature>
<feature type="modified residue" description="Phosphoserine" evidence="5">
    <location>
        <position position="831"/>
    </location>
</feature>
<feature type="modified residue" description="Phosphoserine" evidence="5">
    <location>
        <position position="833"/>
    </location>
</feature>
<feature type="modified residue" description="Phosphothreonine" evidence="5">
    <location>
        <position position="930"/>
    </location>
</feature>
<feature type="splice variant" id="VSP_024060" description="In isoform 2." evidence="6">
    <original>NSSSSSNKATTITNCNNHN</original>
    <variation>IAVDHHNSSTRMCINIFAT</variation>
    <location>
        <begin position="764"/>
        <end position="782"/>
    </location>
</feature>
<feature type="splice variant" id="VSP_024061" description="In isoform 2." evidence="6">
    <location>
        <begin position="783"/>
        <end position="1300"/>
    </location>
</feature>
<evidence type="ECO:0000255" key="1">
    <source>
        <dbReference type="PROSITE-ProRule" id="PRU00190"/>
    </source>
</evidence>
<evidence type="ECO:0000255" key="2">
    <source>
        <dbReference type="PROSITE-ProRule" id="PRU00903"/>
    </source>
</evidence>
<evidence type="ECO:0000256" key="3">
    <source>
        <dbReference type="SAM" id="MobiDB-lite"/>
    </source>
</evidence>
<evidence type="ECO:0000269" key="4">
    <source>
    </source>
</evidence>
<evidence type="ECO:0000269" key="5">
    <source>
    </source>
</evidence>
<evidence type="ECO:0000303" key="6">
    <source>
    </source>
</evidence>
<evidence type="ECO:0000305" key="7"/>
<evidence type="ECO:0000305" key="8">
    <source>
    </source>
</evidence>
<gene>
    <name type="primary">Hmt4-20</name>
    <name type="synonym">Suv4-20</name>
    <name type="ORF">CG13363</name>
</gene>
<organism>
    <name type="scientific">Drosophila melanogaster</name>
    <name type="common">Fruit fly</name>
    <dbReference type="NCBI Taxonomy" id="7227"/>
    <lineage>
        <taxon>Eukaryota</taxon>
        <taxon>Metazoa</taxon>
        <taxon>Ecdysozoa</taxon>
        <taxon>Arthropoda</taxon>
        <taxon>Hexapoda</taxon>
        <taxon>Insecta</taxon>
        <taxon>Pterygota</taxon>
        <taxon>Neoptera</taxon>
        <taxon>Endopterygota</taxon>
        <taxon>Diptera</taxon>
        <taxon>Brachycera</taxon>
        <taxon>Muscomorpha</taxon>
        <taxon>Ephydroidea</taxon>
        <taxon>Drosophilidae</taxon>
        <taxon>Drosophila</taxon>
        <taxon>Sophophora</taxon>
    </lineage>
</organism>
<sequence length="1300" mass="137525">MVVGSNHTRRGETGSRFTNSSSSSSTSGGPTASASSTTSVTSSLATNSTSTSTAAALLSSMSHKSHGPPPSAPPSAHHQTNQQHHQVAHSQPHATHYQQTNQHPSHHHQSHQSSNGSGGGSAGSGSGSGSVVSGLNGCNGSAVSRLSQSTGMSPRELSENDDLATSLILDPHLGFQTHKMNIRFRPLKVDTQQLKAIVDDFIHTQNYDIAIQRIYEGPWIPRHLKNKNKIATKRLHDHIVRYLRVFDKDSGFAIEACYRYTLEEQRGAKISSTKRWSKNDKIECLVGCIAELTEAEEAALLHSGKNDFSVMYSCRKNCAQLWLGPAAYINHDCRANCKFLATGRDTACVKVLRDIEVGEEITCFYGEDFFGDSNRYCECETCERRGTGAFAGKDDGLMLGLSMGLGLASSGPGNNGGYRLRETDNRINRIKSRANSTNSTSNSNSNTNDSTGPSETSSTNGLVASGGAGGATGAAMLPTPSQQSTGGKEATAAVSLLEKKLPNVVVSPLTMKELRQKGMTKYDAEMIMANAAYQQQHHHQHHFHHHHHHHHHHHNHGQHASTGAEATAAVQQMAAMQKPGVGGTGAAGNAGATTVSSVAAGAGSEVNGGRSTSLRKSMRVNSTSSSISTASADEVIAPVVAASISLPSKAPVVLMPRCKPAQMAIAALHQSQQRQLRRSERQKEKLTDGESSDTSSEQQKKEQKQQDHQLPQKMFSLAEEPQPEKSEEKQQEQQKRVTRNSAGRVGLVARLATAHNNNIATTTNSSSSSNKATTITNCNNHNSNNSSRINHNSNLSSRLSVKSRKPAPSEASSIPSSTSSENQQQQATRRSCSPTPAYKKNLLASFDPDPPSTQGIKEQLKDESVTYSPVKQKRSRRAAALAAAQSIHCEALGGFPTGSTGSQRKRAQAGEPTTSCSSTTISNVEPLLKTPERRLKLTLRMKRSPILDEVIELGTSLSNGGAGRGAPGSHREGTAGEGSVRSALNLTGSSSNGIEYEILRMEGISEHGNDDDEDEEEDDEEPAAEEEEEPPPKEELQLVNKKQRKKQRSRSRSSQRRSPAPSSVYGTPQKKRLRLIFGNESHTIDIPPAAAEGSGSGLDDLNSSGGGGDESFNASYASSTSLTVNTSSSSTSSSSGVGGATSTSAEPVDSSTVGPPIAAQSPSSTTSSSFQSACTSTTNSNSYFPNGKQRAAGEDSYAMHYYQLGKFAGTPSPGQGQAIVSSSSGSSGGGGSGAGFLSMPKHTFGTCALLAPTSFACLQNQPQISQQKTSSGGGAGVVPTSTSTGAVTSHHHTNNHHGQK</sequence>
<protein>
    <recommendedName>
        <fullName>Histone-lysine N-methyltransferase Suv4-20</fullName>
        <ecNumber evidence="8">2.1.1.361</ecNumber>
        <ecNumber evidence="8">2.1.1.362</ecNumber>
    </recommendedName>
    <alternativeName>
        <fullName>Suppressor of variegation 4-20</fullName>
        <shortName>Su(var)4-20</shortName>
    </alternativeName>
</protein>
<comment type="function">
    <text evidence="4">Histone methyltransferase that specifically trimethylates 'Lys-20' of histone H4. H4 'Lys-20' trimethylation represents a specific tag for epigenetic transcriptional repression. Mainly functions in pericentric heterochromatin regions, thereby playing a central role in the establishment of constitutive heterochromatin in these regions. Acts as a dominant suppressor of position-effect variegation.</text>
</comment>
<comment type="catalytic activity">
    <reaction evidence="2 8">
        <text>L-lysyl(20)-[histone H4] + S-adenosyl-L-methionine = N(6)-methyl-L-lysyl(20)-[histone H4] + S-adenosyl-L-homocysteine + H(+)</text>
        <dbReference type="Rhea" id="RHEA:60344"/>
        <dbReference type="Rhea" id="RHEA-COMP:15554"/>
        <dbReference type="Rhea" id="RHEA-COMP:15555"/>
        <dbReference type="ChEBI" id="CHEBI:15378"/>
        <dbReference type="ChEBI" id="CHEBI:29969"/>
        <dbReference type="ChEBI" id="CHEBI:57856"/>
        <dbReference type="ChEBI" id="CHEBI:59789"/>
        <dbReference type="ChEBI" id="CHEBI:61929"/>
        <dbReference type="EC" id="2.1.1.361"/>
    </reaction>
</comment>
<comment type="catalytic activity">
    <reaction evidence="2 8">
        <text>N(6)-methyl-L-lysyl(20)-[histone H4] + S-adenosyl-L-methionine = N(6),N(6)-dimethyl-L-lysyl(20)-[histone H4] + S-adenosyl-L-homocysteine + H(+)</text>
        <dbReference type="Rhea" id="RHEA:60348"/>
        <dbReference type="Rhea" id="RHEA-COMP:15555"/>
        <dbReference type="Rhea" id="RHEA-COMP:15556"/>
        <dbReference type="ChEBI" id="CHEBI:15378"/>
        <dbReference type="ChEBI" id="CHEBI:57856"/>
        <dbReference type="ChEBI" id="CHEBI:59789"/>
        <dbReference type="ChEBI" id="CHEBI:61929"/>
        <dbReference type="ChEBI" id="CHEBI:61976"/>
        <dbReference type="EC" id="2.1.1.362"/>
    </reaction>
</comment>
<comment type="catalytic activity">
    <reaction evidence="2 8">
        <text>N(6),N(6)-dimethyl-L-lysyl(20)-[histone H4] + S-adenosyl-L-methionine = N(6),N(6),N(6)-trimethyl-L-lysyl(20)-[histone H4] + S-adenosyl-L-homocysteine + H(+)</text>
        <dbReference type="Rhea" id="RHEA:61992"/>
        <dbReference type="Rhea" id="RHEA-COMP:15556"/>
        <dbReference type="Rhea" id="RHEA-COMP:15998"/>
        <dbReference type="ChEBI" id="CHEBI:15378"/>
        <dbReference type="ChEBI" id="CHEBI:57856"/>
        <dbReference type="ChEBI" id="CHEBI:59789"/>
        <dbReference type="ChEBI" id="CHEBI:61961"/>
        <dbReference type="ChEBI" id="CHEBI:61976"/>
    </reaction>
</comment>
<comment type="subcellular location">
    <subcellularLocation>
        <location evidence="8">Nucleus</location>
    </subcellularLocation>
    <subcellularLocation>
        <location evidence="8">Chromosome</location>
    </subcellularLocation>
</comment>
<comment type="alternative products">
    <event type="alternative splicing"/>
    <isoform>
        <id>Q9W5E0-1</id>
        <name>1</name>
        <sequence type="displayed"/>
    </isoform>
    <isoform>
        <id>Q9W5E0-2</id>
        <name>2</name>
        <sequence type="described" ref="VSP_024060 VSP_024061"/>
    </isoform>
</comment>
<comment type="similarity">
    <text evidence="2">Belongs to the class V-like SAM-binding methyltransferase superfamily. Histone-lysine methyltransferase family. Suvar4-20 subfamily.</text>
</comment>
<comment type="sequence caution" evidence="7">
    <conflict type="erroneous initiation">
        <sequence resource="EMBL-CDS" id="AAL90255"/>
    </conflict>
    <text>Truncated N-terminus.</text>
</comment>
<comment type="sequence caution" evidence="7">
    <conflict type="erroneous gene model prediction">
        <sequence resource="EMBL-CDS" id="CAA20894"/>
    </conflict>
</comment>
<accession>Q9W5E0</accession>
<accession>O77261</accession>
<accession>Q8T029</accession>
<accession>Q8T3U6</accession>